<gene>
    <name type="primary">rpsU</name>
    <name type="ordered locus">BH1354</name>
</gene>
<reference key="1">
    <citation type="journal article" date="2000" name="Nucleic Acids Res.">
        <title>Complete genome sequence of the alkaliphilic bacterium Bacillus halodurans and genomic sequence comparison with Bacillus subtilis.</title>
        <authorList>
            <person name="Takami H."/>
            <person name="Nakasone K."/>
            <person name="Takaki Y."/>
            <person name="Maeno G."/>
            <person name="Sasaki R."/>
            <person name="Masui N."/>
            <person name="Fuji F."/>
            <person name="Hirama C."/>
            <person name="Nakamura Y."/>
            <person name="Ogasawara N."/>
            <person name="Kuhara S."/>
            <person name="Horikoshi K."/>
        </authorList>
    </citation>
    <scope>NUCLEOTIDE SEQUENCE [LARGE SCALE GENOMIC DNA]</scope>
    <source>
        <strain>ATCC BAA-125 / DSM 18197 / FERM 7344 / JCM 9153 / C-125</strain>
    </source>
</reference>
<name>RS21_HALH5</name>
<proteinExistence type="inferred from homology"/>
<organism>
    <name type="scientific">Halalkalibacterium halodurans (strain ATCC BAA-125 / DSM 18197 / FERM 7344 / JCM 9153 / C-125)</name>
    <name type="common">Bacillus halodurans</name>
    <dbReference type="NCBI Taxonomy" id="272558"/>
    <lineage>
        <taxon>Bacteria</taxon>
        <taxon>Bacillati</taxon>
        <taxon>Bacillota</taxon>
        <taxon>Bacilli</taxon>
        <taxon>Bacillales</taxon>
        <taxon>Bacillaceae</taxon>
        <taxon>Halalkalibacterium (ex Joshi et al. 2022)</taxon>
    </lineage>
</organism>
<dbReference type="EMBL" id="BA000004">
    <property type="protein sequence ID" value="BAB05073.1"/>
    <property type="molecule type" value="Genomic_DNA"/>
</dbReference>
<dbReference type="PIR" id="B83819">
    <property type="entry name" value="B83819"/>
</dbReference>
<dbReference type="RefSeq" id="WP_010897519.1">
    <property type="nucleotide sequence ID" value="NC_002570.2"/>
</dbReference>
<dbReference type="SMR" id="Q9KD65"/>
<dbReference type="STRING" id="272558.gene:10727248"/>
<dbReference type="GeneID" id="87596974"/>
<dbReference type="KEGG" id="bha:BH1354"/>
<dbReference type="eggNOG" id="COG0828">
    <property type="taxonomic scope" value="Bacteria"/>
</dbReference>
<dbReference type="HOGENOM" id="CLU_159258_3_2_9"/>
<dbReference type="OrthoDB" id="9799244at2"/>
<dbReference type="Proteomes" id="UP000001258">
    <property type="component" value="Chromosome"/>
</dbReference>
<dbReference type="GO" id="GO:1990904">
    <property type="term" value="C:ribonucleoprotein complex"/>
    <property type="evidence" value="ECO:0007669"/>
    <property type="project" value="UniProtKB-KW"/>
</dbReference>
<dbReference type="GO" id="GO:0005840">
    <property type="term" value="C:ribosome"/>
    <property type="evidence" value="ECO:0007669"/>
    <property type="project" value="UniProtKB-KW"/>
</dbReference>
<dbReference type="GO" id="GO:0003735">
    <property type="term" value="F:structural constituent of ribosome"/>
    <property type="evidence" value="ECO:0007669"/>
    <property type="project" value="InterPro"/>
</dbReference>
<dbReference type="GO" id="GO:0006412">
    <property type="term" value="P:translation"/>
    <property type="evidence" value="ECO:0007669"/>
    <property type="project" value="UniProtKB-UniRule"/>
</dbReference>
<dbReference type="Gene3D" id="1.20.5.1150">
    <property type="entry name" value="Ribosomal protein S8"/>
    <property type="match status" value="1"/>
</dbReference>
<dbReference type="HAMAP" id="MF_00358">
    <property type="entry name" value="Ribosomal_bS21"/>
    <property type="match status" value="1"/>
</dbReference>
<dbReference type="InterPro" id="IPR001911">
    <property type="entry name" value="Ribosomal_bS21"/>
</dbReference>
<dbReference type="InterPro" id="IPR018278">
    <property type="entry name" value="Ribosomal_bS21_CS"/>
</dbReference>
<dbReference type="InterPro" id="IPR038380">
    <property type="entry name" value="Ribosomal_bS21_sf"/>
</dbReference>
<dbReference type="NCBIfam" id="TIGR00030">
    <property type="entry name" value="S21p"/>
    <property type="match status" value="1"/>
</dbReference>
<dbReference type="PANTHER" id="PTHR21109">
    <property type="entry name" value="MITOCHONDRIAL 28S RIBOSOMAL PROTEIN S21"/>
    <property type="match status" value="1"/>
</dbReference>
<dbReference type="PANTHER" id="PTHR21109:SF22">
    <property type="entry name" value="SMALL RIBOSOMAL SUBUNIT PROTEIN BS21"/>
    <property type="match status" value="1"/>
</dbReference>
<dbReference type="Pfam" id="PF01165">
    <property type="entry name" value="Ribosomal_S21"/>
    <property type="match status" value="1"/>
</dbReference>
<dbReference type="PRINTS" id="PR00976">
    <property type="entry name" value="RIBOSOMALS21"/>
</dbReference>
<dbReference type="PROSITE" id="PS01181">
    <property type="entry name" value="RIBOSOMAL_S21"/>
    <property type="match status" value="1"/>
</dbReference>
<evidence type="ECO:0000256" key="1">
    <source>
        <dbReference type="SAM" id="MobiDB-lite"/>
    </source>
</evidence>
<evidence type="ECO:0000305" key="2"/>
<feature type="chain" id="PRO_0000178297" description="Small ribosomal subunit protein bS21">
    <location>
        <begin position="1"/>
        <end position="57"/>
    </location>
</feature>
<feature type="region of interest" description="Disordered" evidence="1">
    <location>
        <begin position="31"/>
        <end position="57"/>
    </location>
</feature>
<feature type="compositionally biased region" description="Basic residues" evidence="1">
    <location>
        <begin position="33"/>
        <end position="57"/>
    </location>
</feature>
<protein>
    <recommendedName>
        <fullName evidence="2">Small ribosomal subunit protein bS21</fullName>
    </recommendedName>
    <alternativeName>
        <fullName>30S ribosomal protein S21</fullName>
    </alternativeName>
</protein>
<comment type="similarity">
    <text evidence="2">Belongs to the bacterial ribosomal protein bS21 family.</text>
</comment>
<accession>Q9KD65</accession>
<keyword id="KW-1185">Reference proteome</keyword>
<keyword id="KW-0687">Ribonucleoprotein</keyword>
<keyword id="KW-0689">Ribosomal protein</keyword>
<sequence>MAETRVRKNESIDAALRRFKRSLSKEGTLAEVRKRKHYEKPSVRRKKKSEAARKRKF</sequence>